<protein>
    <recommendedName>
        <fullName evidence="1">Small ribosomal subunit protein bS16</fullName>
    </recommendedName>
    <alternativeName>
        <fullName evidence="2">30S ribosomal protein S16</fullName>
    </alternativeName>
</protein>
<organism>
    <name type="scientific">Borrelia hermsii (strain HS1 / DAH)</name>
    <dbReference type="NCBI Taxonomy" id="314723"/>
    <lineage>
        <taxon>Bacteria</taxon>
        <taxon>Pseudomonadati</taxon>
        <taxon>Spirochaetota</taxon>
        <taxon>Spirochaetia</taxon>
        <taxon>Spirochaetales</taxon>
        <taxon>Borreliaceae</taxon>
        <taxon>Borrelia</taxon>
    </lineage>
</organism>
<accession>B2S137</accession>
<name>RS16_BORHD</name>
<keyword id="KW-0687">Ribonucleoprotein</keyword>
<keyword id="KW-0689">Ribosomal protein</keyword>
<evidence type="ECO:0000255" key="1">
    <source>
        <dbReference type="HAMAP-Rule" id="MF_00385"/>
    </source>
</evidence>
<evidence type="ECO:0000305" key="2"/>
<proteinExistence type="inferred from homology"/>
<dbReference type="EMBL" id="CP000048">
    <property type="protein sequence ID" value="AAX17193.1"/>
    <property type="molecule type" value="Genomic_DNA"/>
</dbReference>
<dbReference type="RefSeq" id="WP_012422444.1">
    <property type="nucleotide sequence ID" value="NZ_CP073136.1"/>
</dbReference>
<dbReference type="SMR" id="B2S137"/>
<dbReference type="GeneID" id="71843519"/>
<dbReference type="KEGG" id="bhr:BH0695"/>
<dbReference type="HOGENOM" id="CLU_100590_5_0_12"/>
<dbReference type="Proteomes" id="UP000008834">
    <property type="component" value="Chromosome"/>
</dbReference>
<dbReference type="GO" id="GO:0005737">
    <property type="term" value="C:cytoplasm"/>
    <property type="evidence" value="ECO:0007669"/>
    <property type="project" value="UniProtKB-ARBA"/>
</dbReference>
<dbReference type="GO" id="GO:0015935">
    <property type="term" value="C:small ribosomal subunit"/>
    <property type="evidence" value="ECO:0007669"/>
    <property type="project" value="TreeGrafter"/>
</dbReference>
<dbReference type="GO" id="GO:0003735">
    <property type="term" value="F:structural constituent of ribosome"/>
    <property type="evidence" value="ECO:0007669"/>
    <property type="project" value="InterPro"/>
</dbReference>
<dbReference type="GO" id="GO:0006412">
    <property type="term" value="P:translation"/>
    <property type="evidence" value="ECO:0007669"/>
    <property type="project" value="UniProtKB-UniRule"/>
</dbReference>
<dbReference type="Gene3D" id="3.30.1320.10">
    <property type="match status" value="1"/>
</dbReference>
<dbReference type="HAMAP" id="MF_00385">
    <property type="entry name" value="Ribosomal_bS16"/>
    <property type="match status" value="1"/>
</dbReference>
<dbReference type="InterPro" id="IPR000307">
    <property type="entry name" value="Ribosomal_bS16"/>
</dbReference>
<dbReference type="InterPro" id="IPR020592">
    <property type="entry name" value="Ribosomal_bS16_CS"/>
</dbReference>
<dbReference type="InterPro" id="IPR023803">
    <property type="entry name" value="Ribosomal_bS16_dom_sf"/>
</dbReference>
<dbReference type="NCBIfam" id="TIGR00002">
    <property type="entry name" value="S16"/>
    <property type="match status" value="1"/>
</dbReference>
<dbReference type="PANTHER" id="PTHR12919">
    <property type="entry name" value="30S RIBOSOMAL PROTEIN S16"/>
    <property type="match status" value="1"/>
</dbReference>
<dbReference type="PANTHER" id="PTHR12919:SF20">
    <property type="entry name" value="SMALL RIBOSOMAL SUBUNIT PROTEIN BS16M"/>
    <property type="match status" value="1"/>
</dbReference>
<dbReference type="Pfam" id="PF00886">
    <property type="entry name" value="Ribosomal_S16"/>
    <property type="match status" value="1"/>
</dbReference>
<dbReference type="SUPFAM" id="SSF54565">
    <property type="entry name" value="Ribosomal protein S16"/>
    <property type="match status" value="1"/>
</dbReference>
<dbReference type="PROSITE" id="PS00732">
    <property type="entry name" value="RIBOSOMAL_S16"/>
    <property type="match status" value="1"/>
</dbReference>
<reference key="1">
    <citation type="submission" date="2004-12" db="EMBL/GenBank/DDBJ databases">
        <title>The genome sequence of Borrelia hermsii and Borrelia turicatae: comparative analysis of two agents of endemic N. America relapsing fever.</title>
        <authorList>
            <person name="Porcella S.F."/>
            <person name="Raffel S.J."/>
            <person name="Schrumpf M.E."/>
            <person name="Montgomery B."/>
            <person name="Smith T."/>
            <person name="Schwan T.G."/>
        </authorList>
    </citation>
    <scope>NUCLEOTIDE SEQUENCE [LARGE SCALE GENOMIC DNA]</scope>
    <source>
        <strain>HS1 / DAH</strain>
    </source>
</reference>
<comment type="similarity">
    <text evidence="1">Belongs to the bacterial ribosomal protein bS16 family.</text>
</comment>
<gene>
    <name evidence="1" type="primary">rpsP</name>
    <name type="ordered locus">BH0695</name>
</gene>
<sequence length="83" mass="9740">MSVRIRLKRMGAKKRPYYRIVVMDSASPRDGRAIEELGYYHPVEMQNQVKINEDKFRDWIGKGAIPSDTVKRILNKNNFKVES</sequence>
<feature type="chain" id="PRO_1000196344" description="Small ribosomal subunit protein bS16">
    <location>
        <begin position="1"/>
        <end position="83"/>
    </location>
</feature>